<evidence type="ECO:0000250" key="1"/>
<evidence type="ECO:0000250" key="2">
    <source>
        <dbReference type="UniProtKB" id="Q9UHD1"/>
    </source>
</evidence>
<evidence type="ECO:0000255" key="3">
    <source>
        <dbReference type="PROSITE-ProRule" id="PRU00547"/>
    </source>
</evidence>
<evidence type="ECO:0000255" key="4">
    <source>
        <dbReference type="PROSITE-ProRule" id="PRU00734"/>
    </source>
</evidence>
<evidence type="ECO:0000256" key="5">
    <source>
        <dbReference type="SAM" id="MobiDB-lite"/>
    </source>
</evidence>
<protein>
    <recommendedName>
        <fullName>Cysteine and histidine-rich domain-containing protein 1</fullName>
    </recommendedName>
    <alternativeName>
        <fullName>CHORD domain-containing protein 1</fullName>
        <shortName>Chp-1</shortName>
    </alternativeName>
    <alternativeName>
        <fullName>Morgana</fullName>
    </alternativeName>
</protein>
<proteinExistence type="evidence at transcript level"/>
<accession>A9YUB1</accession>
<feature type="initiator methionine" description="Removed" evidence="2">
    <location>
        <position position="1"/>
    </location>
</feature>
<feature type="chain" id="PRO_0000402801" description="Cysteine and histidine-rich domain-containing protein 1">
    <location>
        <begin position="2"/>
        <end position="332"/>
    </location>
</feature>
<feature type="domain" description="CHORD 1" evidence="4">
    <location>
        <begin position="5"/>
        <end position="64"/>
    </location>
</feature>
<feature type="domain" description="CHORD 2" evidence="4">
    <location>
        <begin position="157"/>
        <end position="216"/>
    </location>
</feature>
<feature type="domain" description="CS" evidence="3">
    <location>
        <begin position="227"/>
        <end position="316"/>
    </location>
</feature>
<feature type="region of interest" description="Interaction with PPP5C" evidence="1">
    <location>
        <begin position="2"/>
        <end position="77"/>
    </location>
</feature>
<feature type="region of interest" description="Disordered" evidence="5">
    <location>
        <begin position="61"/>
        <end position="82"/>
    </location>
</feature>
<feature type="region of interest" description="Interaction with HSP90AA1 and HSP90AB1" evidence="1">
    <location>
        <begin position="65"/>
        <end position="316"/>
    </location>
</feature>
<feature type="compositionally biased region" description="Basic and acidic residues" evidence="5">
    <location>
        <begin position="64"/>
        <end position="82"/>
    </location>
</feature>
<feature type="binding site" evidence="4">
    <location>
        <position position="5"/>
    </location>
    <ligand>
        <name>Zn(2+)</name>
        <dbReference type="ChEBI" id="CHEBI:29105"/>
        <label>1</label>
    </ligand>
</feature>
<feature type="binding site" evidence="4">
    <location>
        <position position="10"/>
    </location>
    <ligand>
        <name>Zn(2+)</name>
        <dbReference type="ChEBI" id="CHEBI:29105"/>
        <label>1</label>
    </ligand>
</feature>
<feature type="binding site" evidence="4">
    <location>
        <position position="24"/>
    </location>
    <ligand>
        <name>Zn(2+)</name>
        <dbReference type="ChEBI" id="CHEBI:29105"/>
        <label>1</label>
    </ligand>
</feature>
<feature type="binding site" evidence="4">
    <location>
        <position position="27"/>
    </location>
    <ligand>
        <name>Zn(2+)</name>
        <dbReference type="ChEBI" id="CHEBI:29105"/>
        <label>2</label>
    </ligand>
</feature>
<feature type="binding site" evidence="4">
    <location>
        <position position="42"/>
    </location>
    <ligand>
        <name>Zn(2+)</name>
        <dbReference type="ChEBI" id="CHEBI:29105"/>
        <label>2</label>
    </ligand>
</feature>
<feature type="binding site" evidence="4">
    <location>
        <position position="43"/>
    </location>
    <ligand>
        <name>Zn(2+)</name>
        <dbReference type="ChEBI" id="CHEBI:29105"/>
        <label>2</label>
    </ligand>
</feature>
<feature type="binding site" evidence="4">
    <location>
        <position position="59"/>
    </location>
    <ligand>
        <name>Zn(2+)</name>
        <dbReference type="ChEBI" id="CHEBI:29105"/>
        <label>2</label>
    </ligand>
</feature>
<feature type="binding site" evidence="4">
    <location>
        <position position="64"/>
    </location>
    <ligand>
        <name>Zn(2+)</name>
        <dbReference type="ChEBI" id="CHEBI:29105"/>
        <label>1</label>
    </ligand>
</feature>
<feature type="binding site" evidence="4">
    <location>
        <position position="157"/>
    </location>
    <ligand>
        <name>Zn(2+)</name>
        <dbReference type="ChEBI" id="CHEBI:29105"/>
        <label>3</label>
    </ligand>
</feature>
<feature type="binding site" evidence="4">
    <location>
        <position position="162"/>
    </location>
    <ligand>
        <name>Zn(2+)</name>
        <dbReference type="ChEBI" id="CHEBI:29105"/>
        <label>3</label>
    </ligand>
</feature>
<feature type="binding site" evidence="4">
    <location>
        <position position="176"/>
    </location>
    <ligand>
        <name>Zn(2+)</name>
        <dbReference type="ChEBI" id="CHEBI:29105"/>
        <label>3</label>
    </ligand>
</feature>
<feature type="binding site" evidence="4">
    <location>
        <position position="179"/>
    </location>
    <ligand>
        <name>Zn(2+)</name>
        <dbReference type="ChEBI" id="CHEBI:29105"/>
        <label>4</label>
    </ligand>
</feature>
<feature type="binding site" evidence="4">
    <location>
        <position position="194"/>
    </location>
    <ligand>
        <name>Zn(2+)</name>
        <dbReference type="ChEBI" id="CHEBI:29105"/>
        <label>4</label>
    </ligand>
</feature>
<feature type="binding site" evidence="4">
    <location>
        <position position="195"/>
    </location>
    <ligand>
        <name>Zn(2+)</name>
        <dbReference type="ChEBI" id="CHEBI:29105"/>
        <label>4</label>
    </ligand>
</feature>
<feature type="binding site" evidence="4">
    <location>
        <position position="211"/>
    </location>
    <ligand>
        <name>Zn(2+)</name>
        <dbReference type="ChEBI" id="CHEBI:29105"/>
        <label>4</label>
    </ligand>
</feature>
<feature type="binding site" evidence="4">
    <location>
        <position position="216"/>
    </location>
    <ligand>
        <name>Zn(2+)</name>
        <dbReference type="ChEBI" id="CHEBI:29105"/>
        <label>3</label>
    </ligand>
</feature>
<feature type="modified residue" description="N-acetylalanine" evidence="2">
    <location>
        <position position="2"/>
    </location>
</feature>
<feature type="modified residue" description="Phosphothreonine" evidence="2">
    <location>
        <position position="47"/>
    </location>
</feature>
<feature type="modified residue" description="Phosphoserine" evidence="2">
    <location>
        <position position="51"/>
    </location>
</feature>
<comment type="function">
    <text evidence="1 2">Regulates centrosome duplication, probably by inhibiting the kinase activity of ROCK2. Proposed to act as co-chaperone for HSP90. May play a role in the regulation of NOD1 via a HSP90 chaperone complex. In vitro, has intrinsic chaperone activity. This function may be achieved by inhibiting association of ROCK2 with NPM1. Plays a role in ensuring the localization of the tyrosine kinase receptor EGFR to the plasma membrane, and thus ensures the subsequent regulation of EGFR activity and EGF-induced actin cytoskeleton remodeling (By similarity). Involved in stress response. Prevents tumorigenesis (By similarity).</text>
</comment>
<comment type="subunit">
    <text evidence="1">Interacts with HSP90AA1, HSP90AB1, PPP5C, ROCK1 and ROCK2.</text>
</comment>
<name>CHRD1_PIG</name>
<keyword id="KW-0007">Acetylation</keyword>
<keyword id="KW-0143">Chaperone</keyword>
<keyword id="KW-0479">Metal-binding</keyword>
<keyword id="KW-0597">Phosphoprotein</keyword>
<keyword id="KW-1185">Reference proteome</keyword>
<keyword id="KW-0677">Repeat</keyword>
<keyword id="KW-0346">Stress response</keyword>
<keyword id="KW-0862">Zinc</keyword>
<reference key="1">
    <citation type="submission" date="2007-11" db="EMBL/GenBank/DDBJ databases">
        <authorList>
            <person name="An Q."/>
        </authorList>
    </citation>
    <scope>NUCLEOTIDE SEQUENCE [MRNA]</scope>
</reference>
<sequence>MALLCYNRGCGQRFDPETNSDDACTYHPGVPVFHDALKGWSCCKRRTTDFSDFLSIAGCTKGRHNSEKPPEPVKPEVKTTEKKELSELKPRFQEHIIQAPKPVEAIKRPSPDEPMTNLELKISASLKQALDKLKLSSGNEENKKEEDSDEIKVGTSCKNGGCSKTYQGPQSLEEVCVYHSGVPIFHEGMKYWSCCRRKTSDFNTFLAQEGCTTGKHTWTKKDAGKKVVPCRHDWHQTGGEVTISVYAKNSLPELSQVVANSTLLNVHIVFEGEKEFHQNVKLWGVIDVKRSYVTMTATKIEITMRKAEPMQWASLELPAAKNQEKQKEDTAE</sequence>
<dbReference type="EMBL" id="EU295560">
    <property type="protein sequence ID" value="ABY21264.1"/>
    <property type="molecule type" value="mRNA"/>
</dbReference>
<dbReference type="RefSeq" id="NP_001106917.1">
    <property type="nucleotide sequence ID" value="NM_001113446.1"/>
</dbReference>
<dbReference type="SMR" id="A9YUB1"/>
<dbReference type="FunCoup" id="A9YUB1">
    <property type="interactions" value="2015"/>
</dbReference>
<dbReference type="IntAct" id="A9YUB1">
    <property type="interactions" value="1"/>
</dbReference>
<dbReference type="STRING" id="9823.ENSSSCP00000065187"/>
<dbReference type="PaxDb" id="9823-ENSSSCP00000015855"/>
<dbReference type="PeptideAtlas" id="A9YUB1"/>
<dbReference type="Ensembl" id="ENSSSCT00070025629.1">
    <property type="protein sequence ID" value="ENSSSCP00070021249.1"/>
    <property type="gene ID" value="ENSSSCG00070013110.1"/>
</dbReference>
<dbReference type="GeneID" id="100134961"/>
<dbReference type="KEGG" id="ssc:100134961"/>
<dbReference type="CTD" id="26973"/>
<dbReference type="eggNOG" id="KOG1667">
    <property type="taxonomic scope" value="Eukaryota"/>
</dbReference>
<dbReference type="InParanoid" id="A9YUB1"/>
<dbReference type="OrthoDB" id="10261079at2759"/>
<dbReference type="Proteomes" id="UP000008227">
    <property type="component" value="Unplaced"/>
</dbReference>
<dbReference type="Proteomes" id="UP000314985">
    <property type="component" value="Chromosome 9"/>
</dbReference>
<dbReference type="Proteomes" id="UP000694570">
    <property type="component" value="Unplaced"/>
</dbReference>
<dbReference type="Proteomes" id="UP000694571">
    <property type="component" value="Unplaced"/>
</dbReference>
<dbReference type="Proteomes" id="UP000694720">
    <property type="component" value="Unplaced"/>
</dbReference>
<dbReference type="Proteomes" id="UP000694722">
    <property type="component" value="Unplaced"/>
</dbReference>
<dbReference type="Proteomes" id="UP000694723">
    <property type="component" value="Unplaced"/>
</dbReference>
<dbReference type="Proteomes" id="UP000694724">
    <property type="component" value="Unplaced"/>
</dbReference>
<dbReference type="Proteomes" id="UP000694725">
    <property type="component" value="Unplaced"/>
</dbReference>
<dbReference type="Proteomes" id="UP000694726">
    <property type="component" value="Unplaced"/>
</dbReference>
<dbReference type="Proteomes" id="UP000694727">
    <property type="component" value="Unplaced"/>
</dbReference>
<dbReference type="Proteomes" id="UP000694728">
    <property type="component" value="Unplaced"/>
</dbReference>
<dbReference type="GO" id="GO:0008270">
    <property type="term" value="F:zinc ion binding"/>
    <property type="evidence" value="ECO:0000318"/>
    <property type="project" value="GO_Central"/>
</dbReference>
<dbReference type="GO" id="GO:0051298">
    <property type="term" value="P:centrosome duplication"/>
    <property type="evidence" value="ECO:0000318"/>
    <property type="project" value="GO_Central"/>
</dbReference>
<dbReference type="CDD" id="cd06488">
    <property type="entry name" value="p23_melusin_like"/>
    <property type="match status" value="1"/>
</dbReference>
<dbReference type="FunFam" id="2.60.40.790:FF:000017">
    <property type="entry name" value="Cysteine and histidine-rich domain-containing protein 1"/>
    <property type="match status" value="1"/>
</dbReference>
<dbReference type="FunFam" id="4.10.1130.20:FF:000001">
    <property type="entry name" value="Cysteine and histidine-rich domain-containing protein 1"/>
    <property type="match status" value="1"/>
</dbReference>
<dbReference type="FunFam" id="4.10.1130.20:FF:000002">
    <property type="entry name" value="cysteine and histidine-rich domain-containing protein 1"/>
    <property type="match status" value="1"/>
</dbReference>
<dbReference type="Gene3D" id="2.60.40.790">
    <property type="match status" value="1"/>
</dbReference>
<dbReference type="Gene3D" id="4.10.1130.20">
    <property type="match status" value="2"/>
</dbReference>
<dbReference type="InterPro" id="IPR007051">
    <property type="entry name" value="CHORD_dom"/>
</dbReference>
<dbReference type="InterPro" id="IPR039790">
    <property type="entry name" value="CHRD1"/>
</dbReference>
<dbReference type="InterPro" id="IPR007052">
    <property type="entry name" value="CS_dom"/>
</dbReference>
<dbReference type="InterPro" id="IPR008978">
    <property type="entry name" value="HSP20-like_chaperone"/>
</dbReference>
<dbReference type="PANTHER" id="PTHR46983">
    <property type="entry name" value="CYSTEINE AND HISTIDINE-RICH DOMAIN-CONTAINING PROTEIN 1"/>
    <property type="match status" value="1"/>
</dbReference>
<dbReference type="PANTHER" id="PTHR46983:SF4">
    <property type="entry name" value="CYSTEINE AND HISTIDINE-RICH DOMAIN-CONTAINING PROTEIN 1"/>
    <property type="match status" value="1"/>
</dbReference>
<dbReference type="Pfam" id="PF04968">
    <property type="entry name" value="CHORD"/>
    <property type="match status" value="2"/>
</dbReference>
<dbReference type="Pfam" id="PF04969">
    <property type="entry name" value="CS"/>
    <property type="match status" value="1"/>
</dbReference>
<dbReference type="SUPFAM" id="SSF49764">
    <property type="entry name" value="HSP20-like chaperones"/>
    <property type="match status" value="1"/>
</dbReference>
<dbReference type="PROSITE" id="PS51401">
    <property type="entry name" value="CHORD"/>
    <property type="match status" value="2"/>
</dbReference>
<dbReference type="PROSITE" id="PS51203">
    <property type="entry name" value="CS"/>
    <property type="match status" value="1"/>
</dbReference>
<organism>
    <name type="scientific">Sus scrofa</name>
    <name type="common">Pig</name>
    <dbReference type="NCBI Taxonomy" id="9823"/>
    <lineage>
        <taxon>Eukaryota</taxon>
        <taxon>Metazoa</taxon>
        <taxon>Chordata</taxon>
        <taxon>Craniata</taxon>
        <taxon>Vertebrata</taxon>
        <taxon>Euteleostomi</taxon>
        <taxon>Mammalia</taxon>
        <taxon>Eutheria</taxon>
        <taxon>Laurasiatheria</taxon>
        <taxon>Artiodactyla</taxon>
        <taxon>Suina</taxon>
        <taxon>Suidae</taxon>
        <taxon>Sus</taxon>
    </lineage>
</organism>
<gene>
    <name type="primary">CHORDC1</name>
</gene>